<feature type="signal peptide" evidence="1">
    <location>
        <begin position="1"/>
        <end position="16"/>
    </location>
</feature>
<feature type="chain" id="PRO_0000440473" description="Hemagglutinin" evidence="1">
    <location>
        <begin position="17"/>
        <end position="566"/>
    </location>
</feature>
<feature type="chain" id="PRO_0000039020" description="Hemagglutinin HA1 chain">
    <location>
        <begin position="17"/>
        <end position="344"/>
    </location>
</feature>
<feature type="chain" id="PRO_0000039021" description="Hemagglutinin HA2 chain" evidence="1">
    <location>
        <begin position="346"/>
        <end position="566"/>
    </location>
</feature>
<feature type="topological domain" description="Extracellular" evidence="1">
    <location>
        <begin position="17"/>
        <end position="530"/>
    </location>
</feature>
<feature type="transmembrane region" description="Helical" evidence="1">
    <location>
        <begin position="531"/>
        <end position="551"/>
    </location>
</feature>
<feature type="topological domain" description="Cytoplasmic" evidence="1">
    <location>
        <begin position="552"/>
        <end position="566"/>
    </location>
</feature>
<feature type="site" description="Cleavage; by host" evidence="1">
    <location>
        <begin position="345"/>
        <end position="346"/>
    </location>
</feature>
<feature type="lipid moiety-binding region" description="S-palmitoyl cysteine; by host" evidence="1">
    <location>
        <position position="555"/>
    </location>
</feature>
<feature type="lipid moiety-binding region" description="S-palmitoyl cysteine; by host" evidence="1">
    <location>
        <position position="562"/>
    </location>
</feature>
<feature type="lipid moiety-binding region" description="S-palmitoyl cysteine; by host" evidence="1">
    <location>
        <position position="565"/>
    </location>
</feature>
<feature type="glycosylation site" description="N-linked (GlcNAc...) asparagine; by host" evidence="1">
    <location>
        <position position="24"/>
    </location>
</feature>
<feature type="glycosylation site" description="N-linked (GlcNAc...) asparagine; by host" evidence="1">
    <location>
        <position position="38"/>
    </location>
</feature>
<feature type="glycosylation site" description="N-linked (GlcNAc...) asparagine; by host" evidence="1">
    <location>
        <position position="54"/>
    </location>
</feature>
<feature type="glycosylation site" description="N-linked (GlcNAc...) asparagine; by host" evidence="1">
    <location>
        <position position="181"/>
    </location>
</feature>
<feature type="glycosylation site" description="N-linked (GlcNAc...) asparagine; by host" evidence="1">
    <location>
        <position position="301"/>
    </location>
</feature>
<feature type="glycosylation site" description="N-linked (GlcNAc...) asparagine; by host" evidence="1">
    <location>
        <position position="499"/>
    </location>
</feature>
<feature type="disulfide bond" description="Interchain (between HA1 and HA2 chains)" evidence="1">
    <location>
        <begin position="30"/>
        <end position="482"/>
    </location>
</feature>
<feature type="disulfide bond" evidence="1">
    <location>
        <begin position="68"/>
        <end position="293"/>
    </location>
</feature>
<feature type="disulfide bond" evidence="1">
    <location>
        <begin position="80"/>
        <end position="92"/>
    </location>
</feature>
<feature type="disulfide bond" evidence="1">
    <location>
        <begin position="113"/>
        <end position="155"/>
    </location>
</feature>
<feature type="disulfide bond" evidence="1">
    <location>
        <begin position="297"/>
        <end position="321"/>
    </location>
</feature>
<feature type="disulfide bond" evidence="1">
    <location>
        <begin position="489"/>
        <end position="493"/>
    </location>
</feature>
<organism>
    <name type="scientific">Influenza A virus (strain A/Mallard/New York/6874/1978 H3N2)</name>
    <dbReference type="NCBI Taxonomy" id="384518"/>
    <lineage>
        <taxon>Viruses</taxon>
        <taxon>Riboviria</taxon>
        <taxon>Orthornavirae</taxon>
        <taxon>Negarnaviricota</taxon>
        <taxon>Polyploviricotina</taxon>
        <taxon>Insthoviricetes</taxon>
        <taxon>Articulavirales</taxon>
        <taxon>Orthomyxoviridae</taxon>
        <taxon>Alphainfluenzavirus</taxon>
        <taxon>Alphainfluenzavirus influenzae</taxon>
        <taxon>Influenza A virus</taxon>
    </lineage>
</organism>
<keyword id="KW-1167">Clathrin- and caveolin-independent endocytosis of virus by host</keyword>
<keyword id="KW-1165">Clathrin-mediated endocytosis of virus by host</keyword>
<keyword id="KW-1015">Disulfide bond</keyword>
<keyword id="KW-1170">Fusion of virus membrane with host endosomal membrane</keyword>
<keyword id="KW-1168">Fusion of virus membrane with host membrane</keyword>
<keyword id="KW-0325">Glycoprotein</keyword>
<keyword id="KW-0348">Hemagglutinin</keyword>
<keyword id="KW-1032">Host cell membrane</keyword>
<keyword id="KW-1043">Host membrane</keyword>
<keyword id="KW-0945">Host-virus interaction</keyword>
<keyword id="KW-0449">Lipoprotein</keyword>
<keyword id="KW-0472">Membrane</keyword>
<keyword id="KW-0564">Palmitate</keyword>
<keyword id="KW-0732">Signal</keyword>
<keyword id="KW-0812">Transmembrane</keyword>
<keyword id="KW-1133">Transmembrane helix</keyword>
<keyword id="KW-1161">Viral attachment to host cell</keyword>
<keyword id="KW-0261">Viral envelope protein</keyword>
<keyword id="KW-1162">Viral penetration into host cytoplasm</keyword>
<keyword id="KW-0946">Virion</keyword>
<keyword id="KW-1164">Virus endocytosis by host</keyword>
<keyword id="KW-1160">Virus entry into host cell</keyword>
<proteinExistence type="inferred from homology"/>
<gene>
    <name evidence="1" type="primary">HA</name>
</gene>
<organismHost>
    <name type="scientific">Aves</name>
    <dbReference type="NCBI Taxonomy" id="8782"/>
</organismHost>
<organismHost>
    <name type="scientific">Cetacea</name>
    <name type="common">whales</name>
    <dbReference type="NCBI Taxonomy" id="9721"/>
</organismHost>
<organismHost>
    <name type="scientific">Homo sapiens</name>
    <name type="common">Human</name>
    <dbReference type="NCBI Taxonomy" id="9606"/>
</organismHost>
<organismHost>
    <name type="scientific">Phocidae</name>
    <name type="common">true seals</name>
    <dbReference type="NCBI Taxonomy" id="9709"/>
</organismHost>
<organismHost>
    <name type="scientific">Sus scrofa</name>
    <name type="common">Pig</name>
    <dbReference type="NCBI Taxonomy" id="9823"/>
</organismHost>
<evidence type="ECO:0000255" key="1">
    <source>
        <dbReference type="HAMAP-Rule" id="MF_04072"/>
    </source>
</evidence>
<evidence type="ECO:0000305" key="2"/>
<dbReference type="EMBL" id="M73776">
    <property type="protein sequence ID" value="ABF60578.1"/>
    <property type="molecule type" value="Genomic_RNA"/>
</dbReference>
<dbReference type="SMR" id="P26138"/>
<dbReference type="GlyCosmos" id="P26138">
    <property type="glycosylation" value="6 sites, No reported glycans"/>
</dbReference>
<dbReference type="GO" id="GO:0020002">
    <property type="term" value="C:host cell plasma membrane"/>
    <property type="evidence" value="ECO:0007669"/>
    <property type="project" value="UniProtKB-SubCell"/>
</dbReference>
<dbReference type="GO" id="GO:0016020">
    <property type="term" value="C:membrane"/>
    <property type="evidence" value="ECO:0007669"/>
    <property type="project" value="UniProtKB-UniRule"/>
</dbReference>
<dbReference type="GO" id="GO:0019031">
    <property type="term" value="C:viral envelope"/>
    <property type="evidence" value="ECO:0007669"/>
    <property type="project" value="UniProtKB-UniRule"/>
</dbReference>
<dbReference type="GO" id="GO:0055036">
    <property type="term" value="C:virion membrane"/>
    <property type="evidence" value="ECO:0007669"/>
    <property type="project" value="UniProtKB-SubCell"/>
</dbReference>
<dbReference type="GO" id="GO:0046789">
    <property type="term" value="F:host cell surface receptor binding"/>
    <property type="evidence" value="ECO:0007669"/>
    <property type="project" value="UniProtKB-UniRule"/>
</dbReference>
<dbReference type="GO" id="GO:0075512">
    <property type="term" value="P:clathrin-dependent endocytosis of virus by host cell"/>
    <property type="evidence" value="ECO:0007669"/>
    <property type="project" value="UniProtKB-UniRule"/>
</dbReference>
<dbReference type="GO" id="GO:0039654">
    <property type="term" value="P:fusion of virus membrane with host endosome membrane"/>
    <property type="evidence" value="ECO:0007669"/>
    <property type="project" value="UniProtKB-UniRule"/>
</dbReference>
<dbReference type="GO" id="GO:0019064">
    <property type="term" value="P:fusion of virus membrane with host plasma membrane"/>
    <property type="evidence" value="ECO:0007669"/>
    <property type="project" value="InterPro"/>
</dbReference>
<dbReference type="GO" id="GO:0046761">
    <property type="term" value="P:viral budding from plasma membrane"/>
    <property type="evidence" value="ECO:0007669"/>
    <property type="project" value="UniProtKB-UniRule"/>
</dbReference>
<dbReference type="GO" id="GO:0019062">
    <property type="term" value="P:virion attachment to host cell"/>
    <property type="evidence" value="ECO:0007669"/>
    <property type="project" value="UniProtKB-KW"/>
</dbReference>
<dbReference type="FunFam" id="3.90.20.10:FF:000001">
    <property type="entry name" value="Hemagglutinin"/>
    <property type="match status" value="1"/>
</dbReference>
<dbReference type="FunFam" id="3.90.209.20:FF:000001">
    <property type="entry name" value="Hemagglutinin"/>
    <property type="match status" value="1"/>
</dbReference>
<dbReference type="Gene3D" id="3.90.20.10">
    <property type="match status" value="1"/>
</dbReference>
<dbReference type="Gene3D" id="3.90.209.20">
    <property type="match status" value="1"/>
</dbReference>
<dbReference type="HAMAP" id="MF_04072">
    <property type="entry name" value="INFV_HEMA"/>
    <property type="match status" value="1"/>
</dbReference>
<dbReference type="InterPro" id="IPR008980">
    <property type="entry name" value="Capsid_hemagglutn"/>
</dbReference>
<dbReference type="InterPro" id="IPR013828">
    <property type="entry name" value="Hemagglutn_HA1_a/b_dom_sf"/>
</dbReference>
<dbReference type="InterPro" id="IPR000149">
    <property type="entry name" value="Hemagglutn_influenz_A"/>
</dbReference>
<dbReference type="InterPro" id="IPR001364">
    <property type="entry name" value="Hemagglutn_influenz_A/B"/>
</dbReference>
<dbReference type="Pfam" id="PF00509">
    <property type="entry name" value="Hemagglutinin"/>
    <property type="match status" value="1"/>
</dbReference>
<dbReference type="PRINTS" id="PR00330">
    <property type="entry name" value="HEMAGGLUTN1"/>
</dbReference>
<dbReference type="PRINTS" id="PR00329">
    <property type="entry name" value="HEMAGGLUTN12"/>
</dbReference>
<dbReference type="SUPFAM" id="SSF58064">
    <property type="entry name" value="Influenza hemagglutinin (stalk)"/>
    <property type="match status" value="1"/>
</dbReference>
<dbReference type="SUPFAM" id="SSF49818">
    <property type="entry name" value="Viral protein domain"/>
    <property type="match status" value="1"/>
</dbReference>
<comment type="function">
    <text>Binds to sialic acid-containing receptors on the cell surface, bringing about the attachment of the virus particle to the cell. This attachment induces virion internalization of about two third of the virus particles through clathrin-dependent endocytosis and about one third through a clathrin- and caveolin-independent pathway. Plays a major role in the determination of host range restriction and virulence. Class I viral fusion protein. Responsible for penetration of the virus into the cell cytoplasm by mediating the fusion of the membrane of the endocytosed virus particle with the endosomal membrane. Low pH in endosomes induces an irreversible conformational change in HA2, releasing the fusion hydrophobic peptide. Several trimers are required to form a competent fusion pore.</text>
</comment>
<comment type="function">
    <text evidence="1">Binds to sialic acid-containing receptors on the cell surface, bringing about the attachment of the virus particle to the cell. This attachment induces virion internalization either through clathrin-dependent endocytosis or through clathrin- and caveolin-independent pathway. Plays a major role in the determination of host range restriction and virulence. Class I viral fusion protein. Responsible for penetration of the virus into the cell cytoplasm by mediating the fusion of the membrane of the endocytosed virus particle with the endosomal membrane. Low pH in endosomes induces an irreversible conformational change in HA2, releasing the fusion hydrophobic peptide. Several trimers are required to form a competent fusion pore.</text>
</comment>
<comment type="subunit">
    <text evidence="1">Homotrimer of disulfide-linked HA1-HA2.</text>
</comment>
<comment type="subcellular location">
    <subcellularLocation>
        <location evidence="1">Virion membrane</location>
        <topology evidence="1">Single-pass type I membrane protein</topology>
    </subcellularLocation>
    <subcellularLocation>
        <location evidence="1">Host apical cell membrane</location>
        <topology evidence="1">Single-pass type I membrane protein</topology>
    </subcellularLocation>
    <text evidence="1">Targeted to the apical plasma membrane in epithelial polarized cells through a signal present in the transmembrane domain. Associated with glycosphingolipid- and cholesterol-enriched detergent-resistant lipid rafts.</text>
</comment>
<comment type="PTM">
    <text evidence="1">Palmitoylated.</text>
</comment>
<comment type="PTM">
    <text evidence="1">In natural infection, inactive HA is matured into HA1 and HA2 outside the cell by one or more trypsin-like, arginine-specific endoprotease secreted by the bronchial epithelial cells. One identified protease that may be involved in this process is secreted in lungs by club cells.</text>
</comment>
<comment type="miscellaneous">
    <text>Major glycoprotein, comprises over 80% of the envelope proteins present in virus particle.</text>
</comment>
<comment type="miscellaneous">
    <text>The extent of infection into host organism is determined by HA. Influenza viruses bud from the apical surface of polarized epithelial cells (e.g. bronchial epithelial cells) into lumen of lungs and are therefore usually pneumotropic. The reason is that HA is cleaved by tryptase clara which is restricted to lungs. However, HAs of H5 and H7 pantropic avian viruses subtypes can be cleaved by furin and subtilisin-type enzymes, allowing the virus to grow in other organs than lungs.</text>
</comment>
<comment type="miscellaneous">
    <text evidence="2">The influenza A genome consist of 8 RNA segments. Genetic variation of hemagglutinin and/or neuraminidase genes results in the emergence of new influenza strains. The mechanism of variation can be the result of point mutations or the result of genetic reassortment between segments of two different strains.</text>
</comment>
<comment type="similarity">
    <text evidence="1">Belongs to the influenza viruses hemagglutinin family.</text>
</comment>
<name>HEMA_I78A4</name>
<sequence length="566" mass="63574">MKTIIVLSCFFCLAFSQDLSENNNNTATLCLGHHAVPNGTIVKTITDDQIEVTNATELVQSSSTGKICNNPHRILDGRDCTLIDALLGDPHCDVFQDETWDLYVERSKSFSNCYPYDVPDYASLRSLVASSGTLEFITEAFTWTGVTQNGGSGACKRGPGNGFFSRLNWLTKSGSAYPVLNVTMPNNDNFDKLYVWGVHHPSTNQEQTNLYVQASGRVTVSTRRSQQTIIPNIGSRPWVRGQSRRISIYWTIVKPGDILVINSNGNLIAPRGYFKMRTGKSSIMRSDAPIDTCISECITPNGSIPNDKPFQNVNKITYGACPKYIKQSTLKLATGMRNVPEKQTRGLFGAIAGFIENGWEGMIDGWYGFRHQNSEGTGQAADLKSTQAAIDQINGKLNRVIEKTNEKFHQIEKEFSEVEGRIQDLEKYVEDTKIDLWSYNADVLVALENQHTIDLTDSEMNKLFEKTRRQLRENAEDMGNGCFKIYHKCDNACIESIRNGTYDHDIYRDEALNNRFQIKGCGVKSGYKDWILWISFAISCFLLCVVLLGFIMWACQRGNIRCNICI</sequence>
<accession>P26138</accession>
<accession>Q1G0L7</accession>
<protein>
    <recommendedName>
        <fullName evidence="1">Hemagglutinin</fullName>
    </recommendedName>
    <component>
        <recommendedName>
            <fullName evidence="1">Hemagglutinin HA1 chain</fullName>
        </recommendedName>
    </component>
    <component>
        <recommendedName>
            <fullName evidence="1">Hemagglutinin HA2 chain</fullName>
        </recommendedName>
    </component>
</protein>
<reference key="1">
    <citation type="journal article" date="1992" name="J. Virol.">
        <title>Evolution of the H3 influenza virus hemagglutinin from human and nonhuman hosts.</title>
        <authorList>
            <person name="Bean W.J."/>
            <person name="Schell M."/>
            <person name="Katz J."/>
            <person name="Kawaoka Y."/>
            <person name="Naeve C."/>
            <person name="Gorman O."/>
            <person name="Webster R.G."/>
        </authorList>
    </citation>
    <scope>NUCLEOTIDE SEQUENCE [GENOMIC RNA]</scope>
</reference>